<name>RS6_FERNB</name>
<proteinExistence type="inferred from homology"/>
<protein>
    <recommendedName>
        <fullName evidence="1">Small ribosomal subunit protein bS6</fullName>
    </recommendedName>
    <alternativeName>
        <fullName evidence="3">30S ribosomal protein S6</fullName>
    </alternativeName>
</protein>
<reference key="1">
    <citation type="submission" date="2007-07" db="EMBL/GenBank/DDBJ databases">
        <title>Complete sequence of Fervidobacterium nodosum Rt17-B1.</title>
        <authorList>
            <consortium name="US DOE Joint Genome Institute"/>
            <person name="Copeland A."/>
            <person name="Lucas S."/>
            <person name="Lapidus A."/>
            <person name="Barry K."/>
            <person name="Glavina del Rio T."/>
            <person name="Dalin E."/>
            <person name="Tice H."/>
            <person name="Pitluck S."/>
            <person name="Saunders E."/>
            <person name="Brettin T."/>
            <person name="Bruce D."/>
            <person name="Detter J.C."/>
            <person name="Han C."/>
            <person name="Schmutz J."/>
            <person name="Larimer F."/>
            <person name="Land M."/>
            <person name="Hauser L."/>
            <person name="Kyrpides N."/>
            <person name="Mikhailova N."/>
            <person name="Nelson K."/>
            <person name="Gogarten J.P."/>
            <person name="Noll K."/>
            <person name="Richardson P."/>
        </authorList>
    </citation>
    <scope>NUCLEOTIDE SEQUENCE [LARGE SCALE GENOMIC DNA]</scope>
    <source>
        <strain>ATCC 35602 / DSM 5306 / Rt17-B1</strain>
    </source>
</reference>
<evidence type="ECO:0000255" key="1">
    <source>
        <dbReference type="HAMAP-Rule" id="MF_00360"/>
    </source>
</evidence>
<evidence type="ECO:0000256" key="2">
    <source>
        <dbReference type="SAM" id="MobiDB-lite"/>
    </source>
</evidence>
<evidence type="ECO:0000305" key="3"/>
<gene>
    <name evidence="1" type="primary">rpsF</name>
    <name type="ordered locus">Fnod_0675</name>
</gene>
<dbReference type="EMBL" id="CP000771">
    <property type="protein sequence ID" value="ABS60530.1"/>
    <property type="molecule type" value="Genomic_DNA"/>
</dbReference>
<dbReference type="RefSeq" id="WP_011993849.1">
    <property type="nucleotide sequence ID" value="NC_009718.1"/>
</dbReference>
<dbReference type="SMR" id="A7HKU7"/>
<dbReference type="STRING" id="381764.Fnod_0675"/>
<dbReference type="KEGG" id="fno:Fnod_0675"/>
<dbReference type="eggNOG" id="COG0360">
    <property type="taxonomic scope" value="Bacteria"/>
</dbReference>
<dbReference type="HOGENOM" id="CLU_113441_5_0_0"/>
<dbReference type="OrthoDB" id="9812702at2"/>
<dbReference type="Proteomes" id="UP000002415">
    <property type="component" value="Chromosome"/>
</dbReference>
<dbReference type="GO" id="GO:0005737">
    <property type="term" value="C:cytoplasm"/>
    <property type="evidence" value="ECO:0007669"/>
    <property type="project" value="UniProtKB-ARBA"/>
</dbReference>
<dbReference type="GO" id="GO:1990904">
    <property type="term" value="C:ribonucleoprotein complex"/>
    <property type="evidence" value="ECO:0007669"/>
    <property type="project" value="UniProtKB-KW"/>
</dbReference>
<dbReference type="GO" id="GO:0005840">
    <property type="term" value="C:ribosome"/>
    <property type="evidence" value="ECO:0007669"/>
    <property type="project" value="UniProtKB-KW"/>
</dbReference>
<dbReference type="GO" id="GO:0070181">
    <property type="term" value="F:small ribosomal subunit rRNA binding"/>
    <property type="evidence" value="ECO:0007669"/>
    <property type="project" value="TreeGrafter"/>
</dbReference>
<dbReference type="GO" id="GO:0003735">
    <property type="term" value="F:structural constituent of ribosome"/>
    <property type="evidence" value="ECO:0007669"/>
    <property type="project" value="InterPro"/>
</dbReference>
<dbReference type="GO" id="GO:0006412">
    <property type="term" value="P:translation"/>
    <property type="evidence" value="ECO:0007669"/>
    <property type="project" value="UniProtKB-UniRule"/>
</dbReference>
<dbReference type="CDD" id="cd00473">
    <property type="entry name" value="bS6"/>
    <property type="match status" value="1"/>
</dbReference>
<dbReference type="Gene3D" id="3.30.70.60">
    <property type="match status" value="1"/>
</dbReference>
<dbReference type="HAMAP" id="MF_00360">
    <property type="entry name" value="Ribosomal_bS6"/>
    <property type="match status" value="1"/>
</dbReference>
<dbReference type="InterPro" id="IPR000529">
    <property type="entry name" value="Ribosomal_bS6"/>
</dbReference>
<dbReference type="InterPro" id="IPR035980">
    <property type="entry name" value="Ribosomal_bS6_sf"/>
</dbReference>
<dbReference type="InterPro" id="IPR020814">
    <property type="entry name" value="Ribosomal_S6_plastid/chlpt"/>
</dbReference>
<dbReference type="InterPro" id="IPR014717">
    <property type="entry name" value="Transl_elong_EF1B/ribsomal_bS6"/>
</dbReference>
<dbReference type="NCBIfam" id="TIGR00166">
    <property type="entry name" value="S6"/>
    <property type="match status" value="1"/>
</dbReference>
<dbReference type="PANTHER" id="PTHR21011">
    <property type="entry name" value="MITOCHONDRIAL 28S RIBOSOMAL PROTEIN S6"/>
    <property type="match status" value="1"/>
</dbReference>
<dbReference type="PANTHER" id="PTHR21011:SF1">
    <property type="entry name" value="SMALL RIBOSOMAL SUBUNIT PROTEIN BS6M"/>
    <property type="match status" value="1"/>
</dbReference>
<dbReference type="Pfam" id="PF01250">
    <property type="entry name" value="Ribosomal_S6"/>
    <property type="match status" value="1"/>
</dbReference>
<dbReference type="SUPFAM" id="SSF54995">
    <property type="entry name" value="Ribosomal protein S6"/>
    <property type="match status" value="1"/>
</dbReference>
<feature type="chain" id="PRO_1000079445" description="Small ribosomal subunit protein bS6">
    <location>
        <begin position="1"/>
        <end position="124"/>
    </location>
</feature>
<feature type="region of interest" description="Disordered" evidence="2">
    <location>
        <begin position="100"/>
        <end position="124"/>
    </location>
</feature>
<feature type="compositionally biased region" description="Polar residues" evidence="2">
    <location>
        <begin position="110"/>
        <end position="124"/>
    </location>
</feature>
<comment type="function">
    <text evidence="1">Binds together with bS18 to 16S ribosomal RNA.</text>
</comment>
<comment type="similarity">
    <text evidence="1">Belongs to the bacterial ribosomal protein bS6 family.</text>
</comment>
<organism>
    <name type="scientific">Fervidobacterium nodosum (strain ATCC 35602 / DSM 5306 / Rt17-B1)</name>
    <dbReference type="NCBI Taxonomy" id="381764"/>
    <lineage>
        <taxon>Bacteria</taxon>
        <taxon>Thermotogati</taxon>
        <taxon>Thermotogota</taxon>
        <taxon>Thermotogae</taxon>
        <taxon>Thermotogales</taxon>
        <taxon>Fervidobacteriaceae</taxon>
        <taxon>Fervidobacterium</taxon>
    </lineage>
</organism>
<accession>A7HKU7</accession>
<keyword id="KW-1185">Reference proteome</keyword>
<keyword id="KW-0687">Ribonucleoprotein</keyword>
<keyword id="KW-0689">Ribosomal protein</keyword>
<keyword id="KW-0694">RNA-binding</keyword>
<keyword id="KW-0699">rRNA-binding</keyword>
<sequence length="124" mass="15056">MRIYETMFIIKPDVSEEERNKLVENVKKFLEERVKAQVETVDRWGIRKLAYKIGKYFEGDYTVMYFRSNGQGLDQLENYFKVHPEFMRWQTFRREDLEKKERRAARQKTGETQENVSQEESSTN</sequence>